<dbReference type="EMBL" id="AE015451">
    <property type="protein sequence ID" value="AAN66598.1"/>
    <property type="molecule type" value="Genomic_DNA"/>
</dbReference>
<dbReference type="RefSeq" id="NP_743134.1">
    <property type="nucleotide sequence ID" value="NC_002947.4"/>
</dbReference>
<dbReference type="SMR" id="Q88P80"/>
<dbReference type="STRING" id="160488.PP_0973"/>
<dbReference type="PaxDb" id="160488-PP_0973"/>
<dbReference type="KEGG" id="ppu:PP_0973"/>
<dbReference type="PATRIC" id="fig|160488.4.peg.1035"/>
<dbReference type="eggNOG" id="COG3081">
    <property type="taxonomic scope" value="Bacteria"/>
</dbReference>
<dbReference type="HOGENOM" id="CLU_063050_0_1_6"/>
<dbReference type="OrthoDB" id="9131762at2"/>
<dbReference type="PhylomeDB" id="Q88P80"/>
<dbReference type="BioCyc" id="PPUT160488:G1G01-1047-MONOMER"/>
<dbReference type="Proteomes" id="UP000000556">
    <property type="component" value="Chromosome"/>
</dbReference>
<dbReference type="GO" id="GO:0043590">
    <property type="term" value="C:bacterial nucleoid"/>
    <property type="evidence" value="ECO:0007669"/>
    <property type="project" value="TreeGrafter"/>
</dbReference>
<dbReference type="GO" id="GO:0005737">
    <property type="term" value="C:cytoplasm"/>
    <property type="evidence" value="ECO:0007669"/>
    <property type="project" value="UniProtKB-UniRule"/>
</dbReference>
<dbReference type="GO" id="GO:0003690">
    <property type="term" value="F:double-stranded DNA binding"/>
    <property type="evidence" value="ECO:0007669"/>
    <property type="project" value="TreeGrafter"/>
</dbReference>
<dbReference type="GO" id="GO:0003727">
    <property type="term" value="F:single-stranded RNA binding"/>
    <property type="evidence" value="ECO:0007669"/>
    <property type="project" value="TreeGrafter"/>
</dbReference>
<dbReference type="HAMAP" id="MF_00730">
    <property type="entry name" value="NdpA"/>
    <property type="match status" value="1"/>
</dbReference>
<dbReference type="InterPro" id="IPR007358">
    <property type="entry name" value="Nucleoid_associated_NdpA"/>
</dbReference>
<dbReference type="NCBIfam" id="NF001557">
    <property type="entry name" value="PRK00378.1"/>
    <property type="match status" value="1"/>
</dbReference>
<dbReference type="PANTHER" id="PTHR38772">
    <property type="match status" value="1"/>
</dbReference>
<dbReference type="PANTHER" id="PTHR38772:SF1">
    <property type="entry name" value="NUCLEOID-ASSOCIATED PROTEIN YEJK"/>
    <property type="match status" value="1"/>
</dbReference>
<dbReference type="Pfam" id="PF04245">
    <property type="entry name" value="NA37"/>
    <property type="match status" value="1"/>
</dbReference>
<evidence type="ECO:0000255" key="1">
    <source>
        <dbReference type="HAMAP-Rule" id="MF_00730"/>
    </source>
</evidence>
<gene>
    <name type="ordered locus">PP_0973</name>
</gene>
<protein>
    <recommendedName>
        <fullName evidence="1">Nucleoid-associated protein PP_0973</fullName>
    </recommendedName>
</protein>
<comment type="subcellular location">
    <subcellularLocation>
        <location evidence="1">Cytoplasm</location>
        <location evidence="1">Nucleoid</location>
    </subcellularLocation>
</comment>
<comment type="similarity">
    <text evidence="1">Belongs to the YejK family.</text>
</comment>
<keyword id="KW-0963">Cytoplasm</keyword>
<keyword id="KW-1185">Reference proteome</keyword>
<reference key="1">
    <citation type="journal article" date="2002" name="Environ. Microbiol.">
        <title>Complete genome sequence and comparative analysis of the metabolically versatile Pseudomonas putida KT2440.</title>
        <authorList>
            <person name="Nelson K.E."/>
            <person name="Weinel C."/>
            <person name="Paulsen I.T."/>
            <person name="Dodson R.J."/>
            <person name="Hilbert H."/>
            <person name="Martins dos Santos V.A.P."/>
            <person name="Fouts D.E."/>
            <person name="Gill S.R."/>
            <person name="Pop M."/>
            <person name="Holmes M."/>
            <person name="Brinkac L.M."/>
            <person name="Beanan M.J."/>
            <person name="DeBoy R.T."/>
            <person name="Daugherty S.C."/>
            <person name="Kolonay J.F."/>
            <person name="Madupu R."/>
            <person name="Nelson W.C."/>
            <person name="White O."/>
            <person name="Peterson J.D."/>
            <person name="Khouri H.M."/>
            <person name="Hance I."/>
            <person name="Chris Lee P."/>
            <person name="Holtzapple E.K."/>
            <person name="Scanlan D."/>
            <person name="Tran K."/>
            <person name="Moazzez A."/>
            <person name="Utterback T.R."/>
            <person name="Rizzo M."/>
            <person name="Lee K."/>
            <person name="Kosack D."/>
            <person name="Moestl D."/>
            <person name="Wedler H."/>
            <person name="Lauber J."/>
            <person name="Stjepandic D."/>
            <person name="Hoheisel J."/>
            <person name="Straetz M."/>
            <person name="Heim S."/>
            <person name="Kiewitz C."/>
            <person name="Eisen J.A."/>
            <person name="Timmis K.N."/>
            <person name="Duesterhoeft A."/>
            <person name="Tuemmler B."/>
            <person name="Fraser C.M."/>
        </authorList>
    </citation>
    <scope>NUCLEOTIDE SEQUENCE [LARGE SCALE GENOMIC DNA]</scope>
    <source>
        <strain>ATCC 47054 / DSM 6125 / CFBP 8728 / NCIMB 11950 / KT2440</strain>
    </source>
</reference>
<feature type="chain" id="PRO_0000210914" description="Nucleoid-associated protein PP_0973">
    <location>
        <begin position="1"/>
        <end position="335"/>
    </location>
</feature>
<name>NDPA_PSEPK</name>
<sequence>MPIRHCIVHLIDKKPDGSPAVLHARDSELAASDAIENLLADLNDSYNAKQGKAWGFFHGESGAYPLSGWLKQYLDEEKDFTAFSRVAVEHLQKLMEESNLSTGGHILFAHYQQGMTEYLAIALLHHSEGVAVNAQLDVTPSRHLDLGQLHLAARINLSEWKNNQNSRQYISFIKGKNGKKVSDYFRDFIGCQEGVDGPGETRTLLKAFSDFVESEDLPEESAREKTQTLVEYATTQTKLGEPVTLEELSSLIDEDRPKAFYDHIRNKDYGLSPEIPADKRTLNQFRRFTGRAEGLSISFEAHLLGDKVEYDEAAGTLIIKGLPTTLVDQLKRRKD</sequence>
<proteinExistence type="inferred from homology"/>
<organism>
    <name type="scientific">Pseudomonas putida (strain ATCC 47054 / DSM 6125 / CFBP 8728 / NCIMB 11950 / KT2440)</name>
    <dbReference type="NCBI Taxonomy" id="160488"/>
    <lineage>
        <taxon>Bacteria</taxon>
        <taxon>Pseudomonadati</taxon>
        <taxon>Pseudomonadota</taxon>
        <taxon>Gammaproteobacteria</taxon>
        <taxon>Pseudomonadales</taxon>
        <taxon>Pseudomonadaceae</taxon>
        <taxon>Pseudomonas</taxon>
    </lineage>
</organism>
<accession>Q88P80</accession>